<dbReference type="EC" id="3.5.1.75" evidence="3"/>
<dbReference type="EMBL" id="AF315580">
    <property type="protein sequence ID" value="AAK28498.1"/>
    <property type="molecule type" value="Genomic_DNA"/>
</dbReference>
<dbReference type="SMR" id="Q9AHE8"/>
<dbReference type="GO" id="GO:0016787">
    <property type="term" value="F:hydrolase activity"/>
    <property type="evidence" value="ECO:0007669"/>
    <property type="project" value="UniProtKB-KW"/>
</dbReference>
<dbReference type="Gene3D" id="3.90.1300.10">
    <property type="entry name" value="Amidase signature (AS) domain"/>
    <property type="match status" value="1"/>
</dbReference>
<dbReference type="InterPro" id="IPR000120">
    <property type="entry name" value="Amidase"/>
</dbReference>
<dbReference type="InterPro" id="IPR023631">
    <property type="entry name" value="Amidase_dom"/>
</dbReference>
<dbReference type="InterPro" id="IPR036928">
    <property type="entry name" value="AS_sf"/>
</dbReference>
<dbReference type="NCBIfam" id="NF005565">
    <property type="entry name" value="PRK07235.1"/>
    <property type="match status" value="1"/>
</dbReference>
<dbReference type="PANTHER" id="PTHR11895:SF170">
    <property type="entry name" value="AMIDASE"/>
    <property type="match status" value="1"/>
</dbReference>
<dbReference type="PANTHER" id="PTHR11895">
    <property type="entry name" value="TRANSAMIDASE"/>
    <property type="match status" value="1"/>
</dbReference>
<dbReference type="Pfam" id="PF01425">
    <property type="entry name" value="Amidase"/>
    <property type="match status" value="1"/>
</dbReference>
<dbReference type="SUPFAM" id="SSF75304">
    <property type="entry name" value="Amidase signature (AS) enzymes"/>
    <property type="match status" value="1"/>
</dbReference>
<evidence type="ECO:0000250" key="1">
    <source>
        <dbReference type="UniProtKB" id="Q7XJJ7"/>
    </source>
</evidence>
<evidence type="ECO:0000269" key="2">
    <source>
    </source>
</evidence>
<evidence type="ECO:0000269" key="3">
    <source>
    </source>
</evidence>
<evidence type="ECO:0000269" key="4">
    <source>
    </source>
</evidence>
<evidence type="ECO:0000303" key="5">
    <source>
    </source>
</evidence>
<evidence type="ECO:0000303" key="6">
    <source>
    </source>
</evidence>
<evidence type="ECO:0000305" key="7"/>
<organism>
    <name type="scientific">Rhizobium radiobacter</name>
    <name type="common">Agrobacterium tumefaciens</name>
    <name type="synonym">Agrobacterium radiobacter</name>
    <dbReference type="NCBI Taxonomy" id="358"/>
    <lineage>
        <taxon>Bacteria</taxon>
        <taxon>Pseudomonadati</taxon>
        <taxon>Pseudomonadota</taxon>
        <taxon>Alphaproteobacteria</taxon>
        <taxon>Hyphomicrobiales</taxon>
        <taxon>Rhizobiaceae</taxon>
        <taxon>Rhizobium/Agrobacterium group</taxon>
        <taxon>Agrobacterium</taxon>
        <taxon>Agrobacterium tumefaciens complex</taxon>
    </lineage>
</organism>
<proteinExistence type="evidence at protein level"/>
<protein>
    <recommendedName>
        <fullName evidence="6">Urethanase</fullName>
        <ecNumber evidence="3">3.5.1.75</ecNumber>
    </recommendedName>
    <alternativeName>
        <fullName evidence="5">Enantioselective amidase</fullName>
    </alternativeName>
    <alternativeName>
        <fullName evidence="6">Ethyl carbamate-degrading amidase</fullName>
    </alternativeName>
</protein>
<name>AMDA_RHIRD</name>
<gene>
    <name evidence="5" type="primary">amdA</name>
</gene>
<feature type="chain" id="PRO_0000461177" description="Urethanase">
    <location>
        <begin position="1"/>
        <end position="517"/>
    </location>
</feature>
<feature type="active site" description="Charge relay system" evidence="1">
    <location>
        <position position="98"/>
    </location>
</feature>
<feature type="active site" description="Charge relay system" evidence="1">
    <location>
        <position position="173"/>
    </location>
</feature>
<feature type="active site" description="Acyl-ester intermediate" evidence="1">
    <location>
        <position position="197"/>
    </location>
</feature>
<feature type="mutagenesis site" description="No change in activity." evidence="4">
    <original>R</original>
    <variation>P</variation>
    <location>
        <position position="94"/>
    </location>
</feature>
<feature type="mutagenesis site" description="1.12-fold increase in specific activity toward ethyl carbamate, shows higher ethanol tolerance. 3.1-fold increase in specific activity toward ethyl carbamate and 1.5-fold increase in ethanol tolerance, shows lower pH tolerance; when associated with A-195." evidence="4">
    <original>I</original>
    <variation>L</variation>
    <location>
        <position position="97"/>
    </location>
</feature>
<feature type="mutagenesis site" description="Almost loss of activity." evidence="3">
    <original>K</original>
    <variation>A</variation>
    <location>
        <position position="98"/>
    </location>
</feature>
<feature type="mutagenesis site" description="Decrease in activity." evidence="4">
    <original>P</original>
    <variation>A</variation>
    <location>
        <position position="163"/>
    </location>
</feature>
<feature type="mutagenesis site" description="Changes substrate specificity. Decrease in activity." evidence="2 4">
    <original>A</original>
    <variation>G</variation>
    <location>
        <position position="172"/>
    </location>
</feature>
<feature type="mutagenesis site" description="Almost loss of activity." evidence="3">
    <original>S</original>
    <variation>A</variation>
    <location>
        <position position="173"/>
    </location>
</feature>
<feature type="mutagenesis site" description="Decrease in activity." evidence="4">
    <original>N</original>
    <variation>G</variation>
    <location>
        <position position="175"/>
    </location>
</feature>
<feature type="mutagenesis site" description="Changes substrate specificity." evidence="2">
    <original>N</original>
    <variation>S</variation>
    <location>
        <position position="175"/>
    </location>
</feature>
<feature type="mutagenesis site" description="1.86-fold increase in specific activity toward ethyl carbamate, shows lower pH tolerance, causes a decrease in the thermostability. 3.1-fold increase in specific activity toward ethyl carbamate and 1.5-fold increase in ethanol tolerance, shows lower pH tolerance; when associated with L-97." evidence="4">
    <original>G</original>
    <variation>A</variation>
    <location>
        <position position="195"/>
    </location>
</feature>
<feature type="mutagenesis site" description="Almost loss of activity." evidence="3">
    <original>S</original>
    <variation>A</variation>
    <location>
        <position position="197"/>
    </location>
</feature>
<feature type="mutagenesis site" description="Decrease in activity." evidence="4">
    <original>L</original>
    <variation>C</variation>
    <location>
        <position position="200"/>
    </location>
</feature>
<keyword id="KW-0903">Direct protein sequencing</keyword>
<keyword id="KW-0378">Hydrolase</keyword>
<sequence>MSLGPELATKEQIREIAADYGLPMTDEEVADHIELLKGAIASYRELEHIPERKLPVKYPRTPGWRPTTQENPLNGWYWRCEIEGAKEGPLKGDRIAIKDVVCVAGVPMMNGSKLLEGYVPEIDATIVTRMLDAGATIVGKSACEDFSFSAGGMTCSTGPVGNPYDPTRNPGASSNGSAVLISTGQVDLAIGGDQGGSIRLPSAWCGVYGLKPTYGLVPYTGCAMIEGTLDHVGPMASSPKGIAKLLSVIAGYDADDPRQQGRIVPGFDTNYLPALERGVKGMKIAILKEGFGHDGSDGMLASDPLVDDCVRSAMETFRGLGAEVAEVSIPEHLTAWHIWTAIGLEGFTAFGVNGNGVGTNWNGWYNTSMAEYLARAMKSRPYDMPATVRSVLIRGEYFRRYYHNRYYGKAQNQRHLINEAYDRVLSEYDIIVCPTIPGLPTKMVDRDAGTLDTVVNQLNQLRNTAVCDLTGHPSMSVPCGLREGLPVGMMLTAKHFDDATLIAAAAAFEAAGDWRKM</sequence>
<reference key="1">
    <citation type="journal article" date="2001" name="Microbiology">
        <title>Genetic and biochemical characterization of an enantioselective amidase from Agrobacterium tumefaciens strain d3.</title>
        <authorList>
            <person name="Trott S."/>
            <person name="Bauer R."/>
            <person name="Knackmuss H.J."/>
            <person name="Stolz A."/>
        </authorList>
    </citation>
    <scope>NUCLEOTIDE SEQUENCE [GENOMIC DNA]</scope>
    <scope>PROTEIN SEQUENCE OF 2-40</scope>
    <scope>FUNCTION</scope>
    <scope>SUBUNIT</scope>
    <scope>MUTAGENESIS OF ALA-172 AND ASN-175</scope>
    <source>
        <strain>DSM 9674 / d3I</strain>
    </source>
</reference>
<reference key="2">
    <citation type="journal article" date="2021" name="J. Biosci. Bioeng.">
        <title>Expression, isolation, and identification of an ethanol-resistant ethyl carbamate-degrading amidase from Agrobacterium tumefaciens d3.</title>
        <authorList>
            <person name="Kang T."/>
            <person name="Lin J."/>
            <person name="Yang L."/>
            <person name="Wu M."/>
        </authorList>
    </citation>
    <scope>FUNCTION</scope>
    <scope>CATALYTIC ACTIVITY</scope>
    <scope>SUBSTRATE SPECIFICITY</scope>
    <scope>ACTIVITY REGULATION</scope>
    <scope>BIOPHYSICOCHEMICAL PROPERTIES</scope>
    <scope>MUTAGENESIS OF LYS-98; SER-173 AND SER-197</scope>
    <source>
        <strain>DSM 9674 / d3I</strain>
    </source>
</reference>
<reference key="3">
    <citation type="journal article" date="2022" name="J. Agric. Food Chem.">
        <title>Sequence and Structure-Guided Engineering of Urethanase from Agrobacterium tumefaciens d3 for Improved Catalytic Activity.</title>
        <authorList>
            <person name="Yao X."/>
            <person name="Kang T."/>
            <person name="Pu Z."/>
            <person name="Zhang T."/>
            <person name="Lin J."/>
            <person name="Yang L."/>
            <person name="Yu H."/>
            <person name="Wu M."/>
        </authorList>
    </citation>
    <scope>FUNCTION</scope>
    <scope>CATALYTIC ACTIVITY</scope>
    <scope>BIOPHYSICOCHEMICAL PROPERTIES</scope>
    <scope>BIOTECHNOLOGY</scope>
    <scope>MUTAGENESIS OF ARG-94; ILE-97; PRO-163; ALA-172; ASN-175; GLY-195 AND LEU-200</scope>
    <source>
        <strain>DSM 9674 / d3I</strain>
    </source>
</reference>
<comment type="function">
    <text evidence="2 3 4">Hydrolase that can catalyze the degradation of ethyl carbamate (also called urethane), a probable human carcinogen widely found in alcoholic beverages (PubMed:34148792, PubMed:35653287). Can also use methyl carbamate, butyl carbamate, acetamide and urea (PubMed:34148792, PubMed:35653287). Also catalyzes the enantioselective hydrolysis of 2-phenylpropionamide, alpha-chlorophenylacetamide, 2-methyl-3-phenylpropionamide and alpha-methoxyphenylacetamide to the corresponding acids (PubMed:11429459). Is inactive on benzamide and L-glutamine (PubMed:34148792).</text>
</comment>
<comment type="catalytic activity">
    <reaction evidence="3 4">
        <text>urethane + H2O + H(+) = ethanol + NH4(+) + CO2</text>
        <dbReference type="Rhea" id="RHEA:21372"/>
        <dbReference type="ChEBI" id="CHEBI:15377"/>
        <dbReference type="ChEBI" id="CHEBI:15378"/>
        <dbReference type="ChEBI" id="CHEBI:16236"/>
        <dbReference type="ChEBI" id="CHEBI:16526"/>
        <dbReference type="ChEBI" id="CHEBI:17967"/>
        <dbReference type="ChEBI" id="CHEBI:28938"/>
        <dbReference type="EC" id="3.5.1.75"/>
    </reaction>
</comment>
<comment type="activity regulation">
    <text evidence="3">Exhibits poor salt tolerance but excellent tolerance to low concentrations of ethanol (PubMed:34148792). EDTA has almost no impact on activity (PubMed:34148792). Activity is increased in the presence of Ca(2+), Mg(2+) and Co(3+) and inhibited in the presence of Al(3+), Zn(2+) and Cu(2+) (PubMed:34148792).</text>
</comment>
<comment type="biophysicochemical properties">
    <kinetics>
        <KM evidence="3">0.964 mM for ethyl carbamate</KM>
        <KM evidence="4">0.87 mM for ethyl carbamate</KM>
        <Vmax evidence="3">0.887 umol/min/mg enzyme toward ethyl carbamate</Vmax>
        <text evidence="4">kcat is 0.81 sec(-1) with ethyl carbamate as substrate.</text>
    </kinetics>
    <phDependence>
        <text evidence="3 4">Optimum pH is 7.5 with ethyl carbamate as substrate (PubMed:34148792, PubMed:35653287). Exhibits relatively high urethanase activity (greater than 70%) within the pH range of 6.5-8.5 (PubMed:34148792). Has excellent pH stability between pH 6 and pH 8 (PubMed:34148792).</text>
    </phDependence>
    <temperatureDependence>
        <text evidence="3 4">Optimum temperature is 55 degrees Celsius with ethyl carbamate as substrate (PubMed:34148792, PubMed:35653287). The urethanase activity remains above 75% between 45 and 65 degrees Celsius (PubMed:34148792).</text>
    </temperatureDependence>
</comment>
<comment type="subunit">
    <text evidence="2">Homooctamer.</text>
</comment>
<comment type="biotechnology">
    <text evidence="4">Urethanase is a promising biocatalyst for degrading ethyl carbamate in industry (PubMed:35653287). However, since ethyl carbamate is not a natural substrate of AmdA, the enzyme shows a limited catalytic activity toward this substrate, hindering its industrial applications (PubMed:35653287). Variants that improve urethanase activity could be good candidates for applications in the food industry (PubMed:35653287).</text>
</comment>
<comment type="similarity">
    <text evidence="7">Belongs to the amidase family.</text>
</comment>
<accession>Q9AHE8</accession>